<accession>A4W1L8</accession>
<comment type="catalytic activity">
    <reaction evidence="1">
        <text>(R)-pantothenate + ATP = (R)-4'-phosphopantothenate + ADP + H(+)</text>
        <dbReference type="Rhea" id="RHEA:16373"/>
        <dbReference type="ChEBI" id="CHEBI:10986"/>
        <dbReference type="ChEBI" id="CHEBI:15378"/>
        <dbReference type="ChEBI" id="CHEBI:29032"/>
        <dbReference type="ChEBI" id="CHEBI:30616"/>
        <dbReference type="ChEBI" id="CHEBI:456216"/>
        <dbReference type="EC" id="2.7.1.33"/>
    </reaction>
</comment>
<comment type="pathway">
    <text evidence="1">Cofactor biosynthesis; coenzyme A biosynthesis; CoA from (R)-pantothenate: step 1/5.</text>
</comment>
<comment type="subcellular location">
    <subcellularLocation>
        <location evidence="1">Cytoplasm</location>
    </subcellularLocation>
</comment>
<comment type="similarity">
    <text evidence="1">Belongs to the prokaryotic pantothenate kinase family.</text>
</comment>
<organism>
    <name type="scientific">Streptococcus suis (strain 98HAH33)</name>
    <dbReference type="NCBI Taxonomy" id="391296"/>
    <lineage>
        <taxon>Bacteria</taxon>
        <taxon>Bacillati</taxon>
        <taxon>Bacillota</taxon>
        <taxon>Bacilli</taxon>
        <taxon>Lactobacillales</taxon>
        <taxon>Streptococcaceae</taxon>
        <taxon>Streptococcus</taxon>
    </lineage>
</organism>
<feature type="chain" id="PRO_1000043268" description="Pantothenate kinase">
    <location>
        <begin position="1"/>
        <end position="306"/>
    </location>
</feature>
<feature type="binding site" evidence="1">
    <location>
        <begin position="91"/>
        <end position="98"/>
    </location>
    <ligand>
        <name>ATP</name>
        <dbReference type="ChEBI" id="CHEBI:30616"/>
    </ligand>
</feature>
<proteinExistence type="inferred from homology"/>
<dbReference type="EC" id="2.7.1.33" evidence="1"/>
<dbReference type="EMBL" id="CP000408">
    <property type="protein sequence ID" value="ABP92257.1"/>
    <property type="molecule type" value="Genomic_DNA"/>
</dbReference>
<dbReference type="SMR" id="A4W1L8"/>
<dbReference type="KEGG" id="ssv:SSU98_1099"/>
<dbReference type="HOGENOM" id="CLU_053818_1_1_9"/>
<dbReference type="UniPathway" id="UPA00241">
    <property type="reaction ID" value="UER00352"/>
</dbReference>
<dbReference type="GO" id="GO:0005737">
    <property type="term" value="C:cytoplasm"/>
    <property type="evidence" value="ECO:0007669"/>
    <property type="project" value="UniProtKB-SubCell"/>
</dbReference>
<dbReference type="GO" id="GO:0005524">
    <property type="term" value="F:ATP binding"/>
    <property type="evidence" value="ECO:0007669"/>
    <property type="project" value="UniProtKB-UniRule"/>
</dbReference>
<dbReference type="GO" id="GO:0004594">
    <property type="term" value="F:pantothenate kinase activity"/>
    <property type="evidence" value="ECO:0007669"/>
    <property type="project" value="UniProtKB-UniRule"/>
</dbReference>
<dbReference type="GO" id="GO:0015937">
    <property type="term" value="P:coenzyme A biosynthetic process"/>
    <property type="evidence" value="ECO:0007669"/>
    <property type="project" value="UniProtKB-UniRule"/>
</dbReference>
<dbReference type="CDD" id="cd02025">
    <property type="entry name" value="PanK"/>
    <property type="match status" value="1"/>
</dbReference>
<dbReference type="Gene3D" id="3.40.50.300">
    <property type="entry name" value="P-loop containing nucleotide triphosphate hydrolases"/>
    <property type="match status" value="1"/>
</dbReference>
<dbReference type="HAMAP" id="MF_00215">
    <property type="entry name" value="Pantothen_kinase_1"/>
    <property type="match status" value="1"/>
</dbReference>
<dbReference type="InterPro" id="IPR027417">
    <property type="entry name" value="P-loop_NTPase"/>
</dbReference>
<dbReference type="InterPro" id="IPR004566">
    <property type="entry name" value="PanK"/>
</dbReference>
<dbReference type="InterPro" id="IPR006083">
    <property type="entry name" value="PRK/URK"/>
</dbReference>
<dbReference type="NCBIfam" id="TIGR00554">
    <property type="entry name" value="panK_bact"/>
    <property type="match status" value="1"/>
</dbReference>
<dbReference type="PANTHER" id="PTHR10285">
    <property type="entry name" value="URIDINE KINASE"/>
    <property type="match status" value="1"/>
</dbReference>
<dbReference type="Pfam" id="PF00485">
    <property type="entry name" value="PRK"/>
    <property type="match status" value="1"/>
</dbReference>
<dbReference type="PIRSF" id="PIRSF000545">
    <property type="entry name" value="Pantothenate_kin"/>
    <property type="match status" value="1"/>
</dbReference>
<dbReference type="SUPFAM" id="SSF52540">
    <property type="entry name" value="P-loop containing nucleoside triphosphate hydrolases"/>
    <property type="match status" value="1"/>
</dbReference>
<name>COAA_STRS2</name>
<protein>
    <recommendedName>
        <fullName evidence="1">Pantothenate kinase</fullName>
        <ecNumber evidence="1">2.7.1.33</ecNumber>
    </recommendedName>
    <alternativeName>
        <fullName evidence="1">Pantothenic acid kinase</fullName>
    </alternativeName>
</protein>
<keyword id="KW-0067">ATP-binding</keyword>
<keyword id="KW-0173">Coenzyme A biosynthesis</keyword>
<keyword id="KW-0963">Cytoplasm</keyword>
<keyword id="KW-0418">Kinase</keyword>
<keyword id="KW-0547">Nucleotide-binding</keyword>
<keyword id="KW-0808">Transferase</keyword>
<evidence type="ECO:0000255" key="1">
    <source>
        <dbReference type="HAMAP-Rule" id="MF_00215"/>
    </source>
</evidence>
<sequence>MKNEFLNFEQIDRATWQQLHRKTTIPLSQSELNSIKSFNDRIQLHEVSDIYLPLVNLIHIYRKARKDLNFTKSLFLQKTIKPQPFIIGVSGSVAVGKSTTSRLLQILIARTFKYAKVELVTTDGFLQPYAVLEERQLLNKKGFPESYDMEKLIDFLDKIKNGYDCQIPVYSHEIYDIIPNKTQEIKSPDFLIVEGINVFQNPQNQRLYVSDYFDLSIYVDADVEHIETWYLERFQKLLTLAKNDPNNYYHRFTQMTYPEILSIAQNTWKNINLANLEKFIEPTRNRADIILHKAENHEIDKIYLKK</sequence>
<gene>
    <name evidence="1" type="primary">coaA</name>
    <name type="ordered locus">SSU98_1099</name>
</gene>
<reference key="1">
    <citation type="journal article" date="2007" name="PLoS ONE">
        <title>A glimpse of streptococcal toxic shock syndrome from comparative genomics of S. suis 2 Chinese isolates.</title>
        <authorList>
            <person name="Chen C."/>
            <person name="Tang J."/>
            <person name="Dong W."/>
            <person name="Wang C."/>
            <person name="Feng Y."/>
            <person name="Wang J."/>
            <person name="Zheng F."/>
            <person name="Pan X."/>
            <person name="Liu D."/>
            <person name="Li M."/>
            <person name="Song Y."/>
            <person name="Zhu X."/>
            <person name="Sun H."/>
            <person name="Feng T."/>
            <person name="Guo Z."/>
            <person name="Ju A."/>
            <person name="Ge J."/>
            <person name="Dong Y."/>
            <person name="Sun W."/>
            <person name="Jiang Y."/>
            <person name="Wang J."/>
            <person name="Yan J."/>
            <person name="Yang H."/>
            <person name="Wang X."/>
            <person name="Gao G.F."/>
            <person name="Yang R."/>
            <person name="Wang J."/>
            <person name="Yu J."/>
        </authorList>
    </citation>
    <scope>NUCLEOTIDE SEQUENCE [LARGE SCALE GENOMIC DNA]</scope>
    <source>
        <strain>98HAH33</strain>
    </source>
</reference>